<protein>
    <recommendedName>
        <fullName>Integrin alpha-E</fullName>
    </recommendedName>
    <alternativeName>
        <fullName>HML-1 antigen</fullName>
    </alternativeName>
    <alternativeName>
        <fullName>Integrin alpha-IEL</fullName>
    </alternativeName>
    <alternativeName>
        <fullName>Mucosal lymphocyte 1 antigen</fullName>
    </alternativeName>
    <cdAntigenName>CD103</cdAntigenName>
    <component>
        <recommendedName>
            <fullName>Integrin alpha-E light chain</fullName>
        </recommendedName>
    </component>
    <component>
        <recommendedName>
            <fullName>Integrin alpha-E heavy chain</fullName>
        </recommendedName>
    </component>
</protein>
<feature type="signal peptide" evidence="11">
    <location>
        <begin position="1"/>
        <end position="18"/>
    </location>
</feature>
<feature type="chain" id="PRO_0000016283" description="Integrin alpha-E">
    <location>
        <begin position="19"/>
        <end position="1179"/>
    </location>
</feature>
<feature type="chain" id="PRO_0000016284" description="Integrin alpha-E light chain">
    <location>
        <begin position="19"/>
        <end position="177"/>
    </location>
</feature>
<feature type="chain" id="PRO_0000016285" description="Integrin alpha-E heavy chain">
    <location>
        <begin position="179"/>
        <end position="1177"/>
    </location>
</feature>
<feature type="topological domain" description="Extracellular" evidence="3">
    <location>
        <begin position="19"/>
        <end position="1124"/>
    </location>
</feature>
<feature type="transmembrane region" description="Helical" evidence="3">
    <location>
        <begin position="1125"/>
        <end position="1147"/>
    </location>
</feature>
<feature type="topological domain" description="Cytoplasmic" evidence="3">
    <location>
        <begin position="1148"/>
        <end position="1179"/>
    </location>
</feature>
<feature type="repeat" description="FG-GAP 1">
    <location>
        <begin position="22"/>
        <end position="79"/>
    </location>
</feature>
<feature type="repeat" description="FG-GAP 2">
    <location>
        <begin position="80"/>
        <end position="138"/>
    </location>
</feature>
<feature type="domain" description="VWFA" evidence="4">
    <location>
        <begin position="200"/>
        <end position="389"/>
    </location>
</feature>
<feature type="repeat" description="FG-GAP 3" evidence="5">
    <location>
        <begin position="390"/>
        <end position="442"/>
    </location>
</feature>
<feature type="repeat" description="FG-GAP 4" evidence="5">
    <location>
        <begin position="447"/>
        <end position="499"/>
    </location>
</feature>
<feature type="repeat" description="FG-GAP 5" evidence="5">
    <location>
        <begin position="500"/>
        <end position="560"/>
    </location>
</feature>
<feature type="repeat" description="FG-GAP 6" evidence="5">
    <location>
        <begin position="563"/>
        <end position="627"/>
    </location>
</feature>
<feature type="repeat" description="FG-GAP 7" evidence="5">
    <location>
        <begin position="631"/>
        <end position="691"/>
    </location>
</feature>
<feature type="region of interest" description="X-domain (extra domain)">
    <location>
        <begin position="145"/>
        <end position="199"/>
    </location>
</feature>
<feature type="region of interest" description="Disordered" evidence="6">
    <location>
        <begin position="158"/>
        <end position="200"/>
    </location>
</feature>
<feature type="short sequence motif" description="GFFKR motif">
    <location>
        <begin position="1150"/>
        <end position="1154"/>
    </location>
</feature>
<feature type="compositionally biased region" description="Acidic residues" evidence="6">
    <location>
        <begin position="182"/>
        <end position="200"/>
    </location>
</feature>
<feature type="binding site" evidence="2">
    <location>
        <position position="522"/>
    </location>
    <ligand>
        <name>Ca(2+)</name>
        <dbReference type="ChEBI" id="CHEBI:29108"/>
        <label>1</label>
    </ligand>
</feature>
<feature type="binding site" evidence="2">
    <location>
        <position position="524"/>
    </location>
    <ligand>
        <name>Ca(2+)</name>
        <dbReference type="ChEBI" id="CHEBI:29108"/>
        <label>1</label>
    </ligand>
</feature>
<feature type="binding site" evidence="2">
    <location>
        <position position="526"/>
    </location>
    <ligand>
        <name>Ca(2+)</name>
        <dbReference type="ChEBI" id="CHEBI:29108"/>
        <label>1</label>
    </ligand>
</feature>
<feature type="binding site" evidence="2">
    <location>
        <position position="530"/>
    </location>
    <ligand>
        <name>Ca(2+)</name>
        <dbReference type="ChEBI" id="CHEBI:29108"/>
        <label>1</label>
    </ligand>
</feature>
<feature type="binding site" evidence="2">
    <location>
        <position position="586"/>
    </location>
    <ligand>
        <name>Ca(2+)</name>
        <dbReference type="ChEBI" id="CHEBI:29108"/>
        <label>2</label>
    </ligand>
</feature>
<feature type="binding site" evidence="2">
    <location>
        <position position="588"/>
    </location>
    <ligand>
        <name>Ca(2+)</name>
        <dbReference type="ChEBI" id="CHEBI:29108"/>
        <label>2</label>
    </ligand>
</feature>
<feature type="binding site" evidence="2">
    <location>
        <position position="590"/>
    </location>
    <ligand>
        <name>Ca(2+)</name>
        <dbReference type="ChEBI" id="CHEBI:29108"/>
        <label>2</label>
    </ligand>
</feature>
<feature type="binding site" evidence="2">
    <location>
        <position position="594"/>
    </location>
    <ligand>
        <name>Ca(2+)</name>
        <dbReference type="ChEBI" id="CHEBI:29108"/>
        <label>2</label>
    </ligand>
</feature>
<feature type="binding site" evidence="2">
    <location>
        <position position="654"/>
    </location>
    <ligand>
        <name>Ca(2+)</name>
        <dbReference type="ChEBI" id="CHEBI:29108"/>
        <label>3</label>
    </ligand>
</feature>
<feature type="binding site" evidence="2">
    <location>
        <position position="656"/>
    </location>
    <ligand>
        <name>Ca(2+)</name>
        <dbReference type="ChEBI" id="CHEBI:29108"/>
        <label>3</label>
    </ligand>
</feature>
<feature type="binding site" evidence="2">
    <location>
        <position position="658"/>
    </location>
    <ligand>
        <name>Ca(2+)</name>
        <dbReference type="ChEBI" id="CHEBI:29108"/>
        <label>3</label>
    </ligand>
</feature>
<feature type="binding site" evidence="2">
    <location>
        <position position="662"/>
    </location>
    <ligand>
        <name>Ca(2+)</name>
        <dbReference type="ChEBI" id="CHEBI:29108"/>
        <label>3</label>
    </ligand>
</feature>
<feature type="glycosylation site" description="N-linked (GlcNAc...) asparagine" evidence="3">
    <location>
        <position position="49"/>
    </location>
</feature>
<feature type="glycosylation site" description="N-linked (GlcNAc...) asparagine" evidence="3">
    <location>
        <position position="271"/>
    </location>
</feature>
<feature type="glycosylation site" description="N-linked (GlcNAc...) asparagine" evidence="3">
    <location>
        <position position="321"/>
    </location>
</feature>
<feature type="glycosylation site" description="N-linked (GlcNAc...) asparagine" evidence="3">
    <location>
        <position position="444"/>
    </location>
</feature>
<feature type="glycosylation site" description="N-linked (GlcNAc...) asparagine" evidence="3">
    <location>
        <position position="726"/>
    </location>
</feature>
<feature type="glycosylation site" description="N-linked (GlcNAc...) asparagine" evidence="3">
    <location>
        <position position="782"/>
    </location>
</feature>
<feature type="glycosylation site" description="N-linked (GlcNAc...) asparagine" evidence="3">
    <location>
        <position position="857"/>
    </location>
</feature>
<feature type="glycosylation site" description="N-linked (GlcNAc...) asparagine" evidence="3">
    <location>
        <position position="934"/>
    </location>
</feature>
<feature type="glycosylation site" description="N-linked (GlcNAc...) asparagine" evidence="3">
    <location>
        <position position="954"/>
    </location>
</feature>
<feature type="glycosylation site" description="N-linked (GlcNAc...) asparagine" evidence="3">
    <location>
        <position position="1065"/>
    </location>
</feature>
<feature type="glycosylation site" description="N-linked (GlcNAc...) asparagine" evidence="3">
    <location>
        <position position="1096"/>
    </location>
</feature>
<feature type="disulfide bond" evidence="1">
    <location>
        <begin position="70"/>
        <end position="79"/>
    </location>
</feature>
<feature type="disulfide bond" evidence="1">
    <location>
        <begin position="126"/>
        <end position="159"/>
    </location>
</feature>
<feature type="disulfide bond" evidence="1">
    <location>
        <begin position="706"/>
        <end position="762"/>
    </location>
</feature>
<feature type="disulfide bond" evidence="1">
    <location>
        <begin position="823"/>
        <end position="829"/>
    </location>
</feature>
<feature type="disulfide bond" evidence="1">
    <location>
        <begin position="893"/>
        <end position="907"/>
    </location>
</feature>
<feature type="disulfide bond" evidence="1">
    <location>
        <begin position="1008"/>
        <end position="1033"/>
    </location>
</feature>
<feature type="disulfide bond" evidence="1">
    <location>
        <begin position="1041"/>
        <end position="1057"/>
    </location>
</feature>
<feature type="sequence variant" id="VAR_008884">
    <original>D</original>
    <variation>E</variation>
    <location>
        <position position="360"/>
    </location>
</feature>
<feature type="sequence variant" id="VAR_054889" description="In dbSNP:rs220479." evidence="10 11">
    <original>I</original>
    <variation>V</variation>
    <location>
        <position position="477"/>
    </location>
</feature>
<feature type="sequence variant" id="VAR_054890" description="In dbSNP:rs2272606." evidence="10 11">
    <original>R</original>
    <variation>Q</variation>
    <location>
        <position position="482"/>
    </location>
</feature>
<feature type="sequence variant" id="VAR_020037" description="In dbSNP:rs3744679.">
    <original>Q</original>
    <variation>H</variation>
    <location>
        <position position="892"/>
    </location>
</feature>
<feature type="sequence variant" id="VAR_034025" description="In dbSNP:rs1716." evidence="7">
    <original>R</original>
    <variation>W</variation>
    <location>
        <position position="950"/>
    </location>
</feature>
<feature type="sequence variant" id="VAR_054891" description="In dbSNP:rs2976230." evidence="10 11">
    <original>V</original>
    <variation>A</variation>
    <location>
        <position position="1019"/>
    </location>
</feature>
<feature type="sequence variant" id="VAR_008885">
    <original>C</original>
    <variation>S</variation>
    <location>
        <position position="1041"/>
    </location>
</feature>
<feature type="mutagenesis site" description="Loss of E-cadherin binding." evidence="8">
    <original>D</original>
    <variation>A</variation>
    <location>
        <position position="208"/>
    </location>
</feature>
<feature type="mutagenesis site" description="Loss of E-cadherin binding." evidence="8">
    <original>F</original>
    <variation>A</variation>
    <location>
        <position position="316"/>
    </location>
</feature>
<feature type="strand" evidence="13">
    <location>
        <begin position="21"/>
        <end position="28"/>
    </location>
</feature>
<feature type="strand" evidence="13">
    <location>
        <begin position="37"/>
        <end position="40"/>
    </location>
</feature>
<feature type="turn" evidence="13">
    <location>
        <begin position="46"/>
        <end position="48"/>
    </location>
</feature>
<feature type="strand" evidence="13">
    <location>
        <begin position="66"/>
        <end position="72"/>
    </location>
</feature>
<feature type="strand" evidence="13">
    <location>
        <begin position="74"/>
        <end position="81"/>
    </location>
</feature>
<feature type="strand" evidence="13">
    <location>
        <begin position="83"/>
        <end position="85"/>
    </location>
</feature>
<feature type="strand" evidence="13">
    <location>
        <begin position="95"/>
        <end position="100"/>
    </location>
</feature>
<feature type="strand" evidence="13">
    <location>
        <begin position="103"/>
        <end position="113"/>
    </location>
</feature>
<feature type="strand" evidence="13">
    <location>
        <begin position="120"/>
        <end position="129"/>
    </location>
</feature>
<feature type="strand" evidence="13">
    <location>
        <begin position="135"/>
        <end position="140"/>
    </location>
</feature>
<feature type="helix" evidence="13">
    <location>
        <begin position="144"/>
        <end position="146"/>
    </location>
</feature>
<feature type="strand" evidence="13">
    <location>
        <begin position="201"/>
        <end position="208"/>
    </location>
</feature>
<feature type="helix" evidence="13">
    <location>
        <begin position="215"/>
        <end position="235"/>
    </location>
</feature>
<feature type="strand" evidence="13">
    <location>
        <begin position="237"/>
        <end position="249"/>
    </location>
</feature>
<feature type="helix" evidence="13">
    <location>
        <begin position="258"/>
        <end position="260"/>
    </location>
</feature>
<feature type="helix" evidence="13">
    <location>
        <begin position="262"/>
        <end position="270"/>
    </location>
</feature>
<feature type="helix" evidence="13">
    <location>
        <begin position="281"/>
        <end position="291"/>
    </location>
</feature>
<feature type="helix" evidence="13">
    <location>
        <begin position="295"/>
        <end position="297"/>
    </location>
</feature>
<feature type="strand" evidence="13">
    <location>
        <begin position="303"/>
        <end position="310"/>
    </location>
</feature>
<feature type="helix" evidence="13">
    <location>
        <begin position="322"/>
        <end position="326"/>
    </location>
</feature>
<feature type="helix" evidence="13">
    <location>
        <begin position="329"/>
        <end position="331"/>
    </location>
</feature>
<feature type="strand" evidence="13">
    <location>
        <begin position="335"/>
        <end position="339"/>
    </location>
</feature>
<feature type="helix" evidence="13">
    <location>
        <begin position="343"/>
        <end position="347"/>
    </location>
</feature>
<feature type="helix" evidence="13">
    <location>
        <begin position="350"/>
        <end position="357"/>
    </location>
</feature>
<feature type="strand" evidence="13">
    <location>
        <begin position="361"/>
        <end position="367"/>
    </location>
</feature>
<feature type="helix" evidence="13">
    <location>
        <begin position="372"/>
        <end position="374"/>
    </location>
</feature>
<feature type="helix" evidence="13">
    <location>
        <begin position="375"/>
        <end position="384"/>
    </location>
</feature>
<feature type="strand" evidence="13">
    <location>
        <begin position="404"/>
        <end position="410"/>
    </location>
</feature>
<feature type="strand" evidence="13">
    <location>
        <begin position="412"/>
        <end position="420"/>
    </location>
</feature>
<feature type="helix" evidence="13">
    <location>
        <begin position="423"/>
        <end position="426"/>
    </location>
</feature>
<feature type="strand" evidence="13">
    <location>
        <begin position="430"/>
        <end position="434"/>
    </location>
</feature>
<feature type="turn" evidence="13">
    <location>
        <begin position="435"/>
        <end position="438"/>
    </location>
</feature>
<feature type="strand" evidence="13">
    <location>
        <begin position="439"/>
        <end position="443"/>
    </location>
</feature>
<feature type="strand" evidence="13">
    <location>
        <begin position="448"/>
        <end position="450"/>
    </location>
</feature>
<feature type="helix" evidence="13">
    <location>
        <begin position="451"/>
        <end position="455"/>
    </location>
</feature>
<feature type="turn" evidence="13">
    <location>
        <begin position="456"/>
        <end position="458"/>
    </location>
</feature>
<feature type="strand" evidence="13">
    <location>
        <begin position="463"/>
        <end position="469"/>
    </location>
</feature>
<feature type="strand" evidence="13">
    <location>
        <begin position="474"/>
        <end position="480"/>
    </location>
</feature>
<feature type="helix" evidence="13">
    <location>
        <begin position="483"/>
        <end position="485"/>
    </location>
</feature>
<feature type="strand" evidence="13">
    <location>
        <begin position="487"/>
        <end position="495"/>
    </location>
</feature>
<feature type="strand" evidence="13">
    <location>
        <begin position="498"/>
        <end position="506"/>
    </location>
</feature>
<feature type="strand" evidence="13">
    <location>
        <begin position="516"/>
        <end position="521"/>
    </location>
</feature>
<feature type="strand" evidence="13">
    <location>
        <begin position="526"/>
        <end position="528"/>
    </location>
</feature>
<feature type="strand" evidence="13">
    <location>
        <begin position="531"/>
        <end position="536"/>
    </location>
</feature>
<feature type="strand" evidence="13">
    <location>
        <begin position="541"/>
        <end position="553"/>
    </location>
</feature>
<feature type="turn" evidence="13">
    <location>
        <begin position="555"/>
        <end position="557"/>
    </location>
</feature>
<feature type="strand" evidence="13">
    <location>
        <begin position="560"/>
        <end position="566"/>
    </location>
</feature>
<feature type="strand" evidence="13">
    <location>
        <begin position="573"/>
        <end position="577"/>
    </location>
</feature>
<feature type="strand" evidence="13">
    <location>
        <begin position="579"/>
        <end position="583"/>
    </location>
</feature>
<feature type="strand" evidence="13">
    <location>
        <begin position="587"/>
        <end position="592"/>
    </location>
</feature>
<feature type="strand" evidence="13">
    <location>
        <begin position="595"/>
        <end position="599"/>
    </location>
</feature>
<feature type="turn" evidence="13">
    <location>
        <begin position="600"/>
        <end position="605"/>
    </location>
</feature>
<feature type="helix" evidence="13">
    <location>
        <begin position="607"/>
        <end position="609"/>
    </location>
</feature>
<feature type="strand" evidence="13">
    <location>
        <begin position="614"/>
        <end position="618"/>
    </location>
</feature>
<feature type="strand" evidence="13">
    <location>
        <begin position="630"/>
        <end position="634"/>
    </location>
</feature>
<feature type="helix" evidence="13">
    <location>
        <begin position="635"/>
        <end position="637"/>
    </location>
</feature>
<feature type="strand" evidence="13">
    <location>
        <begin position="647"/>
        <end position="653"/>
    </location>
</feature>
<feature type="strand" evidence="13">
    <location>
        <begin position="656"/>
        <end position="660"/>
    </location>
</feature>
<feature type="strand" evidence="13">
    <location>
        <begin position="662"/>
        <end position="666"/>
    </location>
</feature>
<feature type="strand" evidence="13">
    <location>
        <begin position="671"/>
        <end position="676"/>
    </location>
</feature>
<feature type="strand" evidence="13">
    <location>
        <begin position="689"/>
        <end position="693"/>
    </location>
</feature>
<feature type="strand" evidence="13">
    <location>
        <begin position="701"/>
        <end position="703"/>
    </location>
</feature>
<feature type="strand" evidence="13">
    <location>
        <begin position="706"/>
        <end position="709"/>
    </location>
</feature>
<feature type="strand" evidence="13">
    <location>
        <begin position="713"/>
        <end position="715"/>
    </location>
</feature>
<feature type="turn" evidence="13">
    <location>
        <begin position="720"/>
        <end position="722"/>
    </location>
</feature>
<feature type="strand" evidence="13">
    <location>
        <begin position="724"/>
        <end position="727"/>
    </location>
</feature>
<feature type="strand" evidence="13">
    <location>
        <begin position="729"/>
        <end position="732"/>
    </location>
</feature>
<feature type="strand" evidence="13">
    <location>
        <begin position="741"/>
        <end position="744"/>
    </location>
</feature>
<feature type="helix" evidence="13">
    <location>
        <begin position="745"/>
        <end position="747"/>
    </location>
</feature>
<feature type="strand" evidence="13">
    <location>
        <begin position="751"/>
        <end position="754"/>
    </location>
</feature>
<feature type="strand" evidence="13">
    <location>
        <begin position="757"/>
        <end position="762"/>
    </location>
</feature>
<feature type="strand" evidence="13">
    <location>
        <begin position="765"/>
        <end position="768"/>
    </location>
</feature>
<feature type="strand" evidence="13">
    <location>
        <begin position="783"/>
        <end position="787"/>
    </location>
</feature>
<feature type="strand" evidence="13">
    <location>
        <begin position="815"/>
        <end position="817"/>
    </location>
</feature>
<feature type="strand" evidence="13">
    <location>
        <begin position="822"/>
        <end position="825"/>
    </location>
</feature>
<feature type="strand" evidence="13">
    <location>
        <begin position="833"/>
        <end position="835"/>
    </location>
</feature>
<feature type="strand" evidence="13">
    <location>
        <begin position="838"/>
        <end position="840"/>
    </location>
</feature>
<feature type="turn" evidence="13">
    <location>
        <begin position="846"/>
        <end position="849"/>
    </location>
</feature>
<feature type="strand" evidence="13">
    <location>
        <begin position="850"/>
        <end position="856"/>
    </location>
</feature>
<feature type="strand" evidence="13">
    <location>
        <begin position="858"/>
        <end position="860"/>
    </location>
</feature>
<feature type="strand" evidence="13">
    <location>
        <begin position="867"/>
        <end position="869"/>
    </location>
</feature>
<feature type="strand" evidence="13">
    <location>
        <begin position="878"/>
        <end position="884"/>
    </location>
</feature>
<feature type="strand" evidence="13">
    <location>
        <begin position="900"/>
        <end position="902"/>
    </location>
</feature>
<feature type="strand" evidence="13">
    <location>
        <begin position="921"/>
        <end position="929"/>
    </location>
</feature>
<feature type="strand" evidence="13">
    <location>
        <begin position="940"/>
        <end position="945"/>
    </location>
</feature>
<feature type="strand" evidence="13">
    <location>
        <begin position="947"/>
        <end position="949"/>
    </location>
</feature>
<feature type="strand" evidence="13">
    <location>
        <begin position="953"/>
        <end position="955"/>
    </location>
</feature>
<organism>
    <name type="scientific">Homo sapiens</name>
    <name type="common">Human</name>
    <dbReference type="NCBI Taxonomy" id="9606"/>
    <lineage>
        <taxon>Eukaryota</taxon>
        <taxon>Metazoa</taxon>
        <taxon>Chordata</taxon>
        <taxon>Craniata</taxon>
        <taxon>Vertebrata</taxon>
        <taxon>Euteleostomi</taxon>
        <taxon>Mammalia</taxon>
        <taxon>Eutheria</taxon>
        <taxon>Euarchontoglires</taxon>
        <taxon>Primates</taxon>
        <taxon>Haplorrhini</taxon>
        <taxon>Catarrhini</taxon>
        <taxon>Hominidae</taxon>
        <taxon>Homo</taxon>
    </lineage>
</organism>
<dbReference type="EMBL" id="L25851">
    <property type="protein sequence ID" value="AAB59359.2"/>
    <property type="molecule type" value="mRNA"/>
</dbReference>
<dbReference type="EMBL" id="AC116914">
    <property type="status" value="NOT_ANNOTATED_CDS"/>
    <property type="molecule type" value="Genomic_DNA"/>
</dbReference>
<dbReference type="EMBL" id="BC113436">
    <property type="protein sequence ID" value="AAI13437.1"/>
    <property type="molecule type" value="mRNA"/>
</dbReference>
<dbReference type="EMBL" id="BC117207">
    <property type="protein sequence ID" value="AAI17208.1"/>
    <property type="molecule type" value="mRNA"/>
</dbReference>
<dbReference type="EMBL" id="AF168787">
    <property type="protein sequence ID" value="AAF43107.1"/>
    <property type="molecule type" value="Genomic_DNA"/>
</dbReference>
<dbReference type="CCDS" id="CCDS32531.1"/>
<dbReference type="PIR" id="A53213">
    <property type="entry name" value="A53213"/>
</dbReference>
<dbReference type="RefSeq" id="NP_002199.3">
    <property type="nucleotide sequence ID" value="NM_002208.4"/>
</dbReference>
<dbReference type="PDB" id="8ZJF">
    <property type="method" value="EM"/>
    <property type="resolution" value="2.70 A"/>
    <property type="chains" value="A=2-1179"/>
</dbReference>
<dbReference type="PDBsum" id="8ZJF"/>
<dbReference type="EMDB" id="EMD-60143"/>
<dbReference type="SMR" id="P38570"/>
<dbReference type="BioGRID" id="109888">
    <property type="interactions" value="7"/>
</dbReference>
<dbReference type="ComplexPortal" id="CPX-1824">
    <property type="entry name" value="Integrin alphaE-beta7 complex"/>
</dbReference>
<dbReference type="CORUM" id="P38570"/>
<dbReference type="FunCoup" id="P38570">
    <property type="interactions" value="150"/>
</dbReference>
<dbReference type="IntAct" id="P38570">
    <property type="interactions" value="3"/>
</dbReference>
<dbReference type="STRING" id="9606.ENSP00000263087"/>
<dbReference type="GlyCosmos" id="P38570">
    <property type="glycosylation" value="11 sites, No reported glycans"/>
</dbReference>
<dbReference type="GlyGen" id="P38570">
    <property type="glycosylation" value="11 sites, 2 N-linked glycans (1 site)"/>
</dbReference>
<dbReference type="iPTMnet" id="P38570"/>
<dbReference type="PhosphoSitePlus" id="P38570"/>
<dbReference type="BioMuta" id="ITGAE"/>
<dbReference type="DMDM" id="226694184"/>
<dbReference type="CPTAC" id="CPTAC-5961"/>
<dbReference type="jPOST" id="P38570"/>
<dbReference type="MassIVE" id="P38570"/>
<dbReference type="PaxDb" id="9606-ENSP00000263087"/>
<dbReference type="PeptideAtlas" id="P38570"/>
<dbReference type="ProteomicsDB" id="55300"/>
<dbReference type="Antibodypedia" id="10997">
    <property type="antibodies" value="1163 antibodies from 43 providers"/>
</dbReference>
<dbReference type="CPTC" id="P38570">
    <property type="antibodies" value="1 antibody"/>
</dbReference>
<dbReference type="DNASU" id="3682"/>
<dbReference type="Ensembl" id="ENST00000263087.9">
    <property type="protein sequence ID" value="ENSP00000263087.4"/>
    <property type="gene ID" value="ENSG00000083457.12"/>
</dbReference>
<dbReference type="GeneID" id="3682"/>
<dbReference type="KEGG" id="hsa:3682"/>
<dbReference type="MANE-Select" id="ENST00000263087.9">
    <property type="protein sequence ID" value="ENSP00000263087.4"/>
    <property type="RefSeq nucleotide sequence ID" value="NM_002208.5"/>
    <property type="RefSeq protein sequence ID" value="NP_002199.3"/>
</dbReference>
<dbReference type="UCSC" id="uc002fwo.5">
    <property type="organism name" value="human"/>
</dbReference>
<dbReference type="AGR" id="HGNC:6147"/>
<dbReference type="CTD" id="3682"/>
<dbReference type="DisGeNET" id="3682"/>
<dbReference type="GeneCards" id="ITGAE"/>
<dbReference type="HGNC" id="HGNC:6147">
    <property type="gene designation" value="ITGAE"/>
</dbReference>
<dbReference type="HPA" id="ENSG00000083457">
    <property type="expression patterns" value="Tissue enhanced (bone marrow, intestine, lung)"/>
</dbReference>
<dbReference type="MIM" id="604682">
    <property type="type" value="gene"/>
</dbReference>
<dbReference type="neXtProt" id="NX_P38570"/>
<dbReference type="OpenTargets" id="ENSG00000083457"/>
<dbReference type="PharmGKB" id="PA29947"/>
<dbReference type="VEuPathDB" id="HostDB:ENSG00000083457"/>
<dbReference type="eggNOG" id="KOG3637">
    <property type="taxonomic scope" value="Eukaryota"/>
</dbReference>
<dbReference type="GeneTree" id="ENSGT00940000161532"/>
<dbReference type="HOGENOM" id="CLU_004111_0_0_1"/>
<dbReference type="InParanoid" id="P38570"/>
<dbReference type="OMA" id="FKRMQKP"/>
<dbReference type="OrthoDB" id="6132182at2759"/>
<dbReference type="PAN-GO" id="P38570">
    <property type="GO annotations" value="7 GO annotations based on evolutionary models"/>
</dbReference>
<dbReference type="PhylomeDB" id="P38570"/>
<dbReference type="TreeFam" id="TF105391"/>
<dbReference type="PathwayCommons" id="P38570"/>
<dbReference type="Reactome" id="R-HSA-216083">
    <property type="pathway name" value="Integrin cell surface interactions"/>
</dbReference>
<dbReference type="SignaLink" id="P38570"/>
<dbReference type="SIGNOR" id="P38570"/>
<dbReference type="BioGRID-ORCS" id="3682">
    <property type="hits" value="9 hits in 1163 CRISPR screens"/>
</dbReference>
<dbReference type="ChiTaRS" id="ITGAE">
    <property type="organism name" value="human"/>
</dbReference>
<dbReference type="GeneWiki" id="ITGAE"/>
<dbReference type="GenomeRNAi" id="3682"/>
<dbReference type="Pharos" id="P38570">
    <property type="development level" value="Tbio"/>
</dbReference>
<dbReference type="PRO" id="PR:P38570"/>
<dbReference type="Proteomes" id="UP000005640">
    <property type="component" value="Chromosome 17"/>
</dbReference>
<dbReference type="RNAct" id="P38570">
    <property type="molecule type" value="protein"/>
</dbReference>
<dbReference type="Bgee" id="ENSG00000083457">
    <property type="expression patterns" value="Expressed in oocyte and 208 other cell types or tissues"/>
</dbReference>
<dbReference type="ExpressionAtlas" id="P38570">
    <property type="expression patterns" value="baseline and differential"/>
</dbReference>
<dbReference type="GO" id="GO:0009897">
    <property type="term" value="C:external side of plasma membrane"/>
    <property type="evidence" value="ECO:0000318"/>
    <property type="project" value="GO_Central"/>
</dbReference>
<dbReference type="GO" id="GO:0008305">
    <property type="term" value="C:integrin complex"/>
    <property type="evidence" value="ECO:0000318"/>
    <property type="project" value="GO_Central"/>
</dbReference>
<dbReference type="GO" id="GO:0005886">
    <property type="term" value="C:plasma membrane"/>
    <property type="evidence" value="ECO:0000304"/>
    <property type="project" value="Reactome"/>
</dbReference>
<dbReference type="GO" id="GO:0005178">
    <property type="term" value="F:integrin binding"/>
    <property type="evidence" value="ECO:0000318"/>
    <property type="project" value="GO_Central"/>
</dbReference>
<dbReference type="GO" id="GO:0046872">
    <property type="term" value="F:metal ion binding"/>
    <property type="evidence" value="ECO:0007669"/>
    <property type="project" value="UniProtKB-KW"/>
</dbReference>
<dbReference type="GO" id="GO:0033627">
    <property type="term" value="P:cell adhesion mediated by integrin"/>
    <property type="evidence" value="ECO:0000318"/>
    <property type="project" value="GO_Central"/>
</dbReference>
<dbReference type="GO" id="GO:0098609">
    <property type="term" value="P:cell-cell adhesion"/>
    <property type="evidence" value="ECO:0000318"/>
    <property type="project" value="GO_Central"/>
</dbReference>
<dbReference type="GO" id="GO:0007229">
    <property type="term" value="P:integrin-mediated signaling pathway"/>
    <property type="evidence" value="ECO:0000318"/>
    <property type="project" value="GO_Central"/>
</dbReference>
<dbReference type="CDD" id="cd01469">
    <property type="entry name" value="vWA_integrins_alpha_subunit"/>
    <property type="match status" value="1"/>
</dbReference>
<dbReference type="FunFam" id="3.40.50.410:FF:000067">
    <property type="entry name" value="Integrin alpha M"/>
    <property type="match status" value="1"/>
</dbReference>
<dbReference type="FunFam" id="2.130.10.130:FF:000008">
    <property type="entry name" value="Integrin subunit alpha 2"/>
    <property type="match status" value="1"/>
</dbReference>
<dbReference type="FunFam" id="2.60.40.1510:FF:000020">
    <property type="entry name" value="Integrin subunit alpha E"/>
    <property type="match status" value="1"/>
</dbReference>
<dbReference type="Gene3D" id="1.20.5.930">
    <property type="entry name" value="Bicelle-embedded integrin alpha(iib) transmembrane segment"/>
    <property type="match status" value="1"/>
</dbReference>
<dbReference type="Gene3D" id="2.130.10.130">
    <property type="entry name" value="Integrin alpha, N-terminal"/>
    <property type="match status" value="2"/>
</dbReference>
<dbReference type="Gene3D" id="2.60.40.1460">
    <property type="entry name" value="Integrin domains. Chain A, domain 2"/>
    <property type="match status" value="1"/>
</dbReference>
<dbReference type="Gene3D" id="2.60.40.1510">
    <property type="entry name" value="ntegrin, alpha v. Chain A, domain 3"/>
    <property type="match status" value="1"/>
</dbReference>
<dbReference type="Gene3D" id="3.40.50.410">
    <property type="entry name" value="von Willebrand factor, type A domain"/>
    <property type="match status" value="1"/>
</dbReference>
<dbReference type="InterPro" id="IPR013517">
    <property type="entry name" value="FG-GAP"/>
</dbReference>
<dbReference type="InterPro" id="IPR013519">
    <property type="entry name" value="Int_alpha_beta-p"/>
</dbReference>
<dbReference type="InterPro" id="IPR000413">
    <property type="entry name" value="Integrin_alpha"/>
</dbReference>
<dbReference type="InterPro" id="IPR018184">
    <property type="entry name" value="Integrin_alpha_C_CS"/>
</dbReference>
<dbReference type="InterPro" id="IPR048285">
    <property type="entry name" value="Integrin_alpha_Ig-like_2"/>
</dbReference>
<dbReference type="InterPro" id="IPR028994">
    <property type="entry name" value="Integrin_alpha_N"/>
</dbReference>
<dbReference type="InterPro" id="IPR032695">
    <property type="entry name" value="Integrin_dom_sf"/>
</dbReference>
<dbReference type="InterPro" id="IPR002035">
    <property type="entry name" value="VWF_A"/>
</dbReference>
<dbReference type="InterPro" id="IPR036465">
    <property type="entry name" value="vWFA_dom_sf"/>
</dbReference>
<dbReference type="PANTHER" id="PTHR23220">
    <property type="entry name" value="INTEGRIN ALPHA"/>
    <property type="match status" value="1"/>
</dbReference>
<dbReference type="PANTHER" id="PTHR23220:SF79">
    <property type="entry name" value="INTEGRIN ALPHA-E"/>
    <property type="match status" value="1"/>
</dbReference>
<dbReference type="Pfam" id="PF01839">
    <property type="entry name" value="FG-GAP"/>
    <property type="match status" value="1"/>
</dbReference>
<dbReference type="Pfam" id="PF20805">
    <property type="entry name" value="Integrin_A_Ig_2"/>
    <property type="match status" value="1"/>
</dbReference>
<dbReference type="Pfam" id="PF00357">
    <property type="entry name" value="Integrin_alpha"/>
    <property type="match status" value="1"/>
</dbReference>
<dbReference type="Pfam" id="PF00092">
    <property type="entry name" value="VWA"/>
    <property type="match status" value="1"/>
</dbReference>
<dbReference type="PRINTS" id="PR01185">
    <property type="entry name" value="INTEGRINA"/>
</dbReference>
<dbReference type="PRINTS" id="PR00453">
    <property type="entry name" value="VWFADOMAIN"/>
</dbReference>
<dbReference type="SMART" id="SM00191">
    <property type="entry name" value="Int_alpha"/>
    <property type="match status" value="4"/>
</dbReference>
<dbReference type="SMART" id="SM00327">
    <property type="entry name" value="VWA"/>
    <property type="match status" value="1"/>
</dbReference>
<dbReference type="SUPFAM" id="SSF69318">
    <property type="entry name" value="Integrin alpha N-terminal domain"/>
    <property type="match status" value="1"/>
</dbReference>
<dbReference type="SUPFAM" id="SSF69179">
    <property type="entry name" value="Integrin domains"/>
    <property type="match status" value="2"/>
</dbReference>
<dbReference type="SUPFAM" id="SSF53300">
    <property type="entry name" value="vWA-like"/>
    <property type="match status" value="1"/>
</dbReference>
<dbReference type="PROSITE" id="PS51470">
    <property type="entry name" value="FG_GAP"/>
    <property type="match status" value="5"/>
</dbReference>
<dbReference type="PROSITE" id="PS00242">
    <property type="entry name" value="INTEGRIN_ALPHA"/>
    <property type="match status" value="1"/>
</dbReference>
<dbReference type="PROSITE" id="PS50234">
    <property type="entry name" value="VWFA"/>
    <property type="match status" value="1"/>
</dbReference>
<keyword id="KW-0002">3D-structure</keyword>
<keyword id="KW-0106">Calcium</keyword>
<keyword id="KW-0130">Cell adhesion</keyword>
<keyword id="KW-0165">Cleavage on pair of basic residues</keyword>
<keyword id="KW-0903">Direct protein sequencing</keyword>
<keyword id="KW-1015">Disulfide bond</keyword>
<keyword id="KW-0325">Glycoprotein</keyword>
<keyword id="KW-0401">Integrin</keyword>
<keyword id="KW-0460">Magnesium</keyword>
<keyword id="KW-0472">Membrane</keyword>
<keyword id="KW-0479">Metal-binding</keyword>
<keyword id="KW-1267">Proteomics identification</keyword>
<keyword id="KW-0675">Receptor</keyword>
<keyword id="KW-1185">Reference proteome</keyword>
<keyword id="KW-0677">Repeat</keyword>
<keyword id="KW-0732">Signal</keyword>
<keyword id="KW-0812">Transmembrane</keyword>
<keyword id="KW-1133">Transmembrane helix</keyword>
<evidence type="ECO:0000250" key="1"/>
<evidence type="ECO:0000250" key="2">
    <source>
        <dbReference type="UniProtKB" id="P08648"/>
    </source>
</evidence>
<evidence type="ECO:0000255" key="3"/>
<evidence type="ECO:0000255" key="4">
    <source>
        <dbReference type="PROSITE-ProRule" id="PRU00219"/>
    </source>
</evidence>
<evidence type="ECO:0000255" key="5">
    <source>
        <dbReference type="PROSITE-ProRule" id="PRU00803"/>
    </source>
</evidence>
<evidence type="ECO:0000256" key="6">
    <source>
        <dbReference type="SAM" id="MobiDB-lite"/>
    </source>
</evidence>
<evidence type="ECO:0000269" key="7">
    <source>
    </source>
</evidence>
<evidence type="ECO:0000269" key="8">
    <source>
    </source>
</evidence>
<evidence type="ECO:0000269" key="9">
    <source>
    </source>
</evidence>
<evidence type="ECO:0000269" key="10">
    <source>
    </source>
</evidence>
<evidence type="ECO:0000269" key="11">
    <source>
    </source>
</evidence>
<evidence type="ECO:0000305" key="12"/>
<evidence type="ECO:0007829" key="13">
    <source>
        <dbReference type="PDB" id="8ZJF"/>
    </source>
</evidence>
<accession>P38570</accession>
<accession>Q17RS6</accession>
<accession>Q9NZU9</accession>
<proteinExistence type="evidence at protein level"/>
<reference key="1">
    <citation type="journal article" date="1994" name="J. Biol. Chem.">
        <title>Molecular cloning of the human mucosal lymphocyte integrin alpha E subunit. Unusual structure and restricted RNA distribution.</title>
        <authorList>
            <person name="Shaw S.K."/>
            <person name="Cepek K.L."/>
            <person name="Murphy E.A."/>
            <person name="Russell G.J."/>
            <person name="Brenner M.B."/>
            <person name="Parker C.M."/>
        </authorList>
    </citation>
    <scope>NUCLEOTIDE SEQUENCE [MRNA]</scope>
    <scope>PROTEIN SEQUENCE OF 19-38 AND 179-188</scope>
    <scope>VARIANTS VAL-477; GLN-482 AND ALA-1019</scope>
    <source>
        <tissue>Leukemia</tissue>
        <tissue>Lymphocyte</tissue>
    </source>
</reference>
<reference key="2">
    <citation type="submission" date="1999-03" db="EMBL/GenBank/DDBJ databases">
        <authorList>
            <person name="Parker C.M."/>
        </authorList>
    </citation>
    <scope>SEQUENCE REVISION TO 88-114</scope>
</reference>
<reference key="3">
    <citation type="journal article" date="2006" name="Nature">
        <title>DNA sequence of human chromosome 17 and analysis of rearrangement in the human lineage.</title>
        <authorList>
            <person name="Zody M.C."/>
            <person name="Garber M."/>
            <person name="Adams D.J."/>
            <person name="Sharpe T."/>
            <person name="Harrow J."/>
            <person name="Lupski J.R."/>
            <person name="Nicholson C."/>
            <person name="Searle S.M."/>
            <person name="Wilming L."/>
            <person name="Young S.K."/>
            <person name="Abouelleil A."/>
            <person name="Allen N.R."/>
            <person name="Bi W."/>
            <person name="Bloom T."/>
            <person name="Borowsky M.L."/>
            <person name="Bugalter B.E."/>
            <person name="Butler J."/>
            <person name="Chang J.L."/>
            <person name="Chen C.-K."/>
            <person name="Cook A."/>
            <person name="Corum B."/>
            <person name="Cuomo C.A."/>
            <person name="de Jong P.J."/>
            <person name="DeCaprio D."/>
            <person name="Dewar K."/>
            <person name="FitzGerald M."/>
            <person name="Gilbert J."/>
            <person name="Gibson R."/>
            <person name="Gnerre S."/>
            <person name="Goldstein S."/>
            <person name="Grafham D.V."/>
            <person name="Grocock R."/>
            <person name="Hafez N."/>
            <person name="Hagopian D.S."/>
            <person name="Hart E."/>
            <person name="Norman C.H."/>
            <person name="Humphray S."/>
            <person name="Jaffe D.B."/>
            <person name="Jones M."/>
            <person name="Kamal M."/>
            <person name="Khodiyar V.K."/>
            <person name="LaButti K."/>
            <person name="Laird G."/>
            <person name="Lehoczky J."/>
            <person name="Liu X."/>
            <person name="Lokyitsang T."/>
            <person name="Loveland J."/>
            <person name="Lui A."/>
            <person name="Macdonald P."/>
            <person name="Major J.E."/>
            <person name="Matthews L."/>
            <person name="Mauceli E."/>
            <person name="McCarroll S.A."/>
            <person name="Mihalev A.H."/>
            <person name="Mudge J."/>
            <person name="Nguyen C."/>
            <person name="Nicol R."/>
            <person name="O'Leary S.B."/>
            <person name="Osoegawa K."/>
            <person name="Schwartz D.C."/>
            <person name="Shaw-Smith C."/>
            <person name="Stankiewicz P."/>
            <person name="Steward C."/>
            <person name="Swarbreck D."/>
            <person name="Venkataraman V."/>
            <person name="Whittaker C.A."/>
            <person name="Yang X."/>
            <person name="Zimmer A.R."/>
            <person name="Bradley A."/>
            <person name="Hubbard T."/>
            <person name="Birren B.W."/>
            <person name="Rogers J."/>
            <person name="Lander E.S."/>
            <person name="Nusbaum C."/>
        </authorList>
    </citation>
    <scope>NUCLEOTIDE SEQUENCE [LARGE SCALE GENOMIC DNA]</scope>
</reference>
<reference key="4">
    <citation type="journal article" date="2004" name="Genome Res.">
        <title>The status, quality, and expansion of the NIH full-length cDNA project: the Mammalian Gene Collection (MGC).</title>
        <authorList>
            <consortium name="The MGC Project Team"/>
        </authorList>
    </citation>
    <scope>NUCLEOTIDE SEQUENCE [LARGE SCALE MRNA]</scope>
    <scope>VARIANTS VAL-477; GLN-482 AND ALA-1019</scope>
</reference>
<reference key="5">
    <citation type="journal article" date="2000" name="Genome Res.">
        <title>The genomic region encompassing the nephropathic cystinosis gene (CTNS): complete sequencing of a 200-kb segment and discovery of a novel gene within the common cystinosis-causing deletion.</title>
        <authorList>
            <person name="Touchman J.W."/>
            <person name="Anikster Y."/>
            <person name="Dietrich N.L."/>
            <person name="Maduro V.V.B."/>
            <person name="McDowell G."/>
            <person name="Shotelersuk V."/>
            <person name="Bouffard G.G."/>
            <person name="Beckstrom-Sternberg S.M."/>
            <person name="Gahl W.A."/>
            <person name="Green E.D."/>
        </authorList>
    </citation>
    <scope>NUCLEOTIDE SEQUENCE [GENOMIC DNA] OF 53-1179</scope>
    <scope>VARIANT TRP-950</scope>
    <source>
        <tissue>Fetal kidney</tissue>
    </source>
</reference>
<reference key="6">
    <citation type="journal article" date="1992" name="Proc. Natl. Acad. Sci. U.S.A.">
        <title>A family of beta 7 integrins on human mucosal lymphocytes.</title>
        <authorList>
            <person name="Parker C.M."/>
            <person name="Cepek K.L."/>
            <person name="Russell G.J."/>
            <person name="Shaw S.K."/>
            <person name="Posnett D.N."/>
            <person name="Schwarting R."/>
            <person name="Brenner M.B."/>
        </authorList>
    </citation>
    <scope>INTERACTION WITH INTEGRIN BETA-7</scope>
    <scope>INDUCTION</scope>
</reference>
<reference key="7">
    <citation type="journal article" date="2000" name="J. Biol. Chem.">
        <title>The role of alpha and beta chains in ligand recognition by beta 7 integrins.</title>
        <authorList>
            <person name="Higgins J.M.G."/>
            <person name="Cernadas M."/>
            <person name="Tan K."/>
            <person name="Irie A."/>
            <person name="Wang J.-H."/>
            <person name="Takada Y."/>
            <person name="Brenner M.B."/>
        </authorList>
    </citation>
    <scope>MUTAGENESIS OF ASP-208 AND PHE-316</scope>
</reference>
<comment type="function">
    <text>Integrin alpha-E/beta-7 is a receptor for E-cadherin. It mediates adhesion of intra-epithelial T-lymphocytes to epithelial cell monolayers.</text>
</comment>
<comment type="subunit">
    <text>Heterodimer of an alpha and a beta subunit. The alpha subunit is composed of a heavy and a light chains linked by a disulfide bond. Alpha-E associates with beta-7.</text>
</comment>
<comment type="subcellular location">
    <subcellularLocation>
        <location>Membrane</location>
        <topology>Single-pass type I membrane protein</topology>
    </subcellularLocation>
</comment>
<comment type="tissue specificity">
    <text>Expressed on a subclass of T-lymphocytes known as intra-epithelial lymphocytes which are located between mucosal epithelial cells.</text>
</comment>
<comment type="induction">
    <text evidence="9">Integrin alpha-E/beta-7 is induced by TGFB1.</text>
</comment>
<comment type="domain">
    <text>The integrin I-domain (insert) is a VWFA domain. Integrins with I-domains do not undergo protease cleavage.</text>
</comment>
<comment type="similarity">
    <text evidence="12">Belongs to the integrin alpha chain family.</text>
</comment>
<sequence>MWLFHTLLCIASLALLAAFNVDVARPWLTPKGGAPFVLSSLLHQDPSTNQTWLLVTSPRTKRTPGPLHRCSLVQDEILCHPVEHVPIPKGRHRGVTVVRSHHGVLICIQVLVRRPHSLSSELTGTCSLLGPDLRPQAQANFFDLENLLDPDARVDTGDCYSNKEGGGEDDVNTARQRRALEKEEEEDKEEEEDEEEEEAGTEIAIILDGSGSIDPPDFQRAKDFISNMMRNFYEKCFECNFALVQYGGVIQTEFDLRDSQDVMASLARVQNITQVGSVTKTASAMQHVLDSIFTSSHGSRRKASKVMVVLTDGGIFEDPLNLTTVINSPKMQGVERFAIGVGEEFKSARTARELNLIASDPDETHAFKVTNYMALDGLLSKLRYNIISMEGTVGDALHYQLAQIGFSAQILDERQVLLGAVGAFDWSGGALLYDTRSRRGRFLNQTAAAAADAEAAQYSYLGYAVAVLHKTCSLSYIAGAPRYKHHGAVFELQKEGREASFLPVLEGEQMGSYFGSELCPVDIDMDGSTDFLLVAAPFYHVHGEEGRVYVYRLSEQDGSFSLARILSGHPGFTNARFGFAMAAMGDLSQDKLTDVAIGAPLEGFGADDGASFGSVYIYNGHWDGLSASPSQRIRASTVAPGLQYFGMSMAGGFDISGDGLADITVGTLGQAVVFRSRPVVRLKVSMAFTPSALPIGFNGVVNVRLCFEISSVTTASESGLREALLNFTLDVDVGKQRRRLQCSDVRSCLGCLREWSSGSQLCEDLLLMPTEGELCEEDCFSNASVKVSYQLQTPEGQTDHPQPILDRYTEPFAIFQLPYEKACKNKLFCVAELQLATTVSQQELVVGLTKELTLNINLTNSGEDSYMTSMALNYPRNLQLKRMQKPPSPNIQCDDPQPVASVLIMNCRIGHPVLKRSSAHVSVVWQLEENAFPNRTADITVTVTNSNERRSLANETHTLQFRHGFVAVLSKPSIMYVNTGQGLSHHKEFLFHVHGENLFGAEYQLQICVPTKLRGLQVVAVKKLTRTQASTVCTWSQERACAYSSVQHVEEWHSVSCVIASDKENVTVAAEISWDHSEELLKDVTELQILGEISFNKSLYEGLNAENHRTKITVVFLKDEKYHSLPIIIKGSVGGLLVLIVILVILFKCGFFKRKYQQLNLESIRKAQLKSENLLEEEN</sequence>
<gene>
    <name type="primary">ITGAE</name>
</gene>
<name>ITAE_HUMAN</name>